<name>SSRP_ENT38</name>
<evidence type="ECO:0000255" key="1">
    <source>
        <dbReference type="HAMAP-Rule" id="MF_00023"/>
    </source>
</evidence>
<evidence type="ECO:0000305" key="2"/>
<feature type="chain" id="PRO_0000331045" description="SsrA-binding protein">
    <location>
        <begin position="1"/>
        <end position="160"/>
    </location>
</feature>
<dbReference type="EMBL" id="CP000653">
    <property type="protein sequence ID" value="ABP61764.1"/>
    <property type="status" value="ALT_INIT"/>
    <property type="molecule type" value="Genomic_DNA"/>
</dbReference>
<dbReference type="RefSeq" id="WP_041689708.1">
    <property type="nucleotide sequence ID" value="NC_009436.1"/>
</dbReference>
<dbReference type="SMR" id="A4WDI4"/>
<dbReference type="STRING" id="399742.Ent638_3100"/>
<dbReference type="KEGG" id="ent:Ent638_3100"/>
<dbReference type="eggNOG" id="COG0691">
    <property type="taxonomic scope" value="Bacteria"/>
</dbReference>
<dbReference type="HOGENOM" id="CLU_108953_3_0_6"/>
<dbReference type="OrthoDB" id="9805462at2"/>
<dbReference type="Proteomes" id="UP000000230">
    <property type="component" value="Chromosome"/>
</dbReference>
<dbReference type="GO" id="GO:0005829">
    <property type="term" value="C:cytosol"/>
    <property type="evidence" value="ECO:0007669"/>
    <property type="project" value="TreeGrafter"/>
</dbReference>
<dbReference type="GO" id="GO:0003723">
    <property type="term" value="F:RNA binding"/>
    <property type="evidence" value="ECO:0007669"/>
    <property type="project" value="UniProtKB-UniRule"/>
</dbReference>
<dbReference type="GO" id="GO:0070929">
    <property type="term" value="P:trans-translation"/>
    <property type="evidence" value="ECO:0007669"/>
    <property type="project" value="UniProtKB-UniRule"/>
</dbReference>
<dbReference type="CDD" id="cd09294">
    <property type="entry name" value="SmpB"/>
    <property type="match status" value="1"/>
</dbReference>
<dbReference type="FunFam" id="2.40.280.10:FF:000001">
    <property type="entry name" value="SsrA-binding protein"/>
    <property type="match status" value="1"/>
</dbReference>
<dbReference type="Gene3D" id="2.40.280.10">
    <property type="match status" value="1"/>
</dbReference>
<dbReference type="HAMAP" id="MF_00023">
    <property type="entry name" value="SmpB"/>
    <property type="match status" value="1"/>
</dbReference>
<dbReference type="InterPro" id="IPR023620">
    <property type="entry name" value="SmpB"/>
</dbReference>
<dbReference type="InterPro" id="IPR000037">
    <property type="entry name" value="SsrA-bd_prot"/>
</dbReference>
<dbReference type="InterPro" id="IPR020081">
    <property type="entry name" value="SsrA-bd_prot_CS"/>
</dbReference>
<dbReference type="NCBIfam" id="NF003843">
    <property type="entry name" value="PRK05422.1"/>
    <property type="match status" value="1"/>
</dbReference>
<dbReference type="NCBIfam" id="TIGR00086">
    <property type="entry name" value="smpB"/>
    <property type="match status" value="1"/>
</dbReference>
<dbReference type="PANTHER" id="PTHR30308:SF2">
    <property type="entry name" value="SSRA-BINDING PROTEIN"/>
    <property type="match status" value="1"/>
</dbReference>
<dbReference type="PANTHER" id="PTHR30308">
    <property type="entry name" value="TMRNA-BINDING COMPONENT OF TRANS-TRANSLATION TAGGING COMPLEX"/>
    <property type="match status" value="1"/>
</dbReference>
<dbReference type="Pfam" id="PF01668">
    <property type="entry name" value="SmpB"/>
    <property type="match status" value="1"/>
</dbReference>
<dbReference type="SUPFAM" id="SSF74982">
    <property type="entry name" value="Small protein B (SmpB)"/>
    <property type="match status" value="1"/>
</dbReference>
<dbReference type="PROSITE" id="PS01317">
    <property type="entry name" value="SSRP"/>
    <property type="match status" value="1"/>
</dbReference>
<protein>
    <recommendedName>
        <fullName evidence="1">SsrA-binding protein</fullName>
    </recommendedName>
    <alternativeName>
        <fullName evidence="1">Small protein B</fullName>
    </alternativeName>
</protein>
<gene>
    <name evidence="1" type="primary">smpB</name>
    <name type="ordered locus">Ent638_3100</name>
</gene>
<proteinExistence type="inferred from homology"/>
<organism>
    <name type="scientific">Enterobacter sp. (strain 638)</name>
    <dbReference type="NCBI Taxonomy" id="399742"/>
    <lineage>
        <taxon>Bacteria</taxon>
        <taxon>Pseudomonadati</taxon>
        <taxon>Pseudomonadota</taxon>
        <taxon>Gammaproteobacteria</taxon>
        <taxon>Enterobacterales</taxon>
        <taxon>Enterobacteriaceae</taxon>
        <taxon>Enterobacter</taxon>
    </lineage>
</organism>
<keyword id="KW-0963">Cytoplasm</keyword>
<keyword id="KW-0694">RNA-binding</keyword>
<accession>A4WDI4</accession>
<reference key="1">
    <citation type="journal article" date="2010" name="PLoS Genet.">
        <title>Genome sequence of the plant growth promoting endophytic bacterium Enterobacter sp. 638.</title>
        <authorList>
            <person name="Taghavi S."/>
            <person name="van der Lelie D."/>
            <person name="Hoffman A."/>
            <person name="Zhang Y.B."/>
            <person name="Walla M.D."/>
            <person name="Vangronsveld J."/>
            <person name="Newman L."/>
            <person name="Monchy S."/>
        </authorList>
    </citation>
    <scope>NUCLEOTIDE SEQUENCE [LARGE SCALE GENOMIC DNA]</scope>
    <source>
        <strain>638</strain>
    </source>
</reference>
<comment type="function">
    <text evidence="1">Required for rescue of stalled ribosomes mediated by trans-translation. Binds to transfer-messenger RNA (tmRNA), required for stable association of tmRNA with ribosomes. tmRNA and SmpB together mimic tRNA shape, replacing the anticodon stem-loop with SmpB. tmRNA is encoded by the ssrA gene; the 2 termini fold to resemble tRNA(Ala) and it encodes a 'tag peptide', a short internal open reading frame. During trans-translation Ala-aminoacylated tmRNA acts like a tRNA, entering the A-site of stalled ribosomes, displacing the stalled mRNA. The ribosome then switches to translate the ORF on the tmRNA; the nascent peptide is terminated with the 'tag peptide' encoded by the tmRNA and targeted for degradation. The ribosome is freed to recommence translation, which seems to be the essential function of trans-translation.</text>
</comment>
<comment type="subcellular location">
    <subcellularLocation>
        <location evidence="1">Cytoplasm</location>
    </subcellularLocation>
    <text evidence="1">The tmRNA-SmpB complex associates with stalled 70S ribosomes.</text>
</comment>
<comment type="similarity">
    <text evidence="1">Belongs to the SmpB family.</text>
</comment>
<comment type="sequence caution" evidence="2">
    <conflict type="erroneous initiation">
        <sequence resource="EMBL-CDS" id="ABP61764"/>
    </conflict>
    <text>Extended N-terminus.</text>
</comment>
<sequence>MTKKKVHKPGSATIALNKRARHEYFIEEEFEAGLSLQGWEVKSLRAGKANISDSYVILIDGEAFLFGANFTPLAVASSHYVCDPIRTRKLLLNQRELESLFGRINREGYTVVALSLYWKNAWCKVKIGVAKGKKQHDKRSDLKDREWQVDKARIMKHAGR</sequence>